<sequence length="100" mass="10880">MTEKLSVEVAYARPDRQWLVALTLPAGATALDAALASGILEACPELDRTALKLGVFGKAAKPDAALREHDRVEIYRPLLADPKEVRRQRAEAGKRMKKGG</sequence>
<name>Y3462_CHRVO</name>
<feature type="chain" id="PRO_0000192485" description="UPF0125 protein CV_3462">
    <location>
        <begin position="1"/>
        <end position="100"/>
    </location>
</feature>
<dbReference type="EMBL" id="AE016825">
    <property type="protein sequence ID" value="AAQ61123.1"/>
    <property type="molecule type" value="Genomic_DNA"/>
</dbReference>
<dbReference type="RefSeq" id="WP_011137009.1">
    <property type="nucleotide sequence ID" value="NC_005085.1"/>
</dbReference>
<dbReference type="SMR" id="Q7NSG4"/>
<dbReference type="STRING" id="243365.CV_3462"/>
<dbReference type="GeneID" id="66364680"/>
<dbReference type="KEGG" id="cvi:CV_3462"/>
<dbReference type="eggNOG" id="COG2914">
    <property type="taxonomic scope" value="Bacteria"/>
</dbReference>
<dbReference type="HOGENOM" id="CLU_150721_1_0_4"/>
<dbReference type="OrthoDB" id="9796575at2"/>
<dbReference type="Proteomes" id="UP000001424">
    <property type="component" value="Chromosome"/>
</dbReference>
<dbReference type="Gene3D" id="3.10.20.280">
    <property type="entry name" value="RnfH-like"/>
    <property type="match status" value="1"/>
</dbReference>
<dbReference type="HAMAP" id="MF_00460">
    <property type="entry name" value="UPF0125_RnfH"/>
    <property type="match status" value="1"/>
</dbReference>
<dbReference type="InterPro" id="IPR016155">
    <property type="entry name" value="Mopterin_synth/thiamin_S_b"/>
</dbReference>
<dbReference type="InterPro" id="IPR005346">
    <property type="entry name" value="RnfH"/>
</dbReference>
<dbReference type="InterPro" id="IPR037021">
    <property type="entry name" value="RnfH_sf"/>
</dbReference>
<dbReference type="NCBIfam" id="NF002490">
    <property type="entry name" value="PRK01777.1"/>
    <property type="match status" value="1"/>
</dbReference>
<dbReference type="PANTHER" id="PTHR37483">
    <property type="entry name" value="UPF0125 PROTEIN RATB"/>
    <property type="match status" value="1"/>
</dbReference>
<dbReference type="PANTHER" id="PTHR37483:SF1">
    <property type="entry name" value="UPF0125 PROTEIN RATB"/>
    <property type="match status" value="1"/>
</dbReference>
<dbReference type="Pfam" id="PF03658">
    <property type="entry name" value="Ub-RnfH"/>
    <property type="match status" value="1"/>
</dbReference>
<dbReference type="SUPFAM" id="SSF54285">
    <property type="entry name" value="MoaD/ThiS"/>
    <property type="match status" value="1"/>
</dbReference>
<protein>
    <recommendedName>
        <fullName evidence="1">UPF0125 protein CV_3462</fullName>
    </recommendedName>
</protein>
<gene>
    <name type="ordered locus">CV_3462</name>
</gene>
<reference key="1">
    <citation type="journal article" date="2003" name="Proc. Natl. Acad. Sci. U.S.A.">
        <title>The complete genome sequence of Chromobacterium violaceum reveals remarkable and exploitable bacterial adaptability.</title>
        <authorList>
            <person name="Vasconcelos A.T.R."/>
            <person name="de Almeida D.F."/>
            <person name="Hungria M."/>
            <person name="Guimaraes C.T."/>
            <person name="Antonio R.V."/>
            <person name="Almeida F.C."/>
            <person name="de Almeida L.G.P."/>
            <person name="de Almeida R."/>
            <person name="Alves-Gomes J.A."/>
            <person name="Andrade E.M."/>
            <person name="Araripe J."/>
            <person name="de Araujo M.F.F."/>
            <person name="Astolfi-Filho S."/>
            <person name="Azevedo V."/>
            <person name="Baptista A.J."/>
            <person name="Bataus L.A.M."/>
            <person name="Batista J.S."/>
            <person name="Belo A."/>
            <person name="van den Berg C."/>
            <person name="Bogo M."/>
            <person name="Bonatto S."/>
            <person name="Bordignon J."/>
            <person name="Brigido M.M."/>
            <person name="Brito C.A."/>
            <person name="Brocchi M."/>
            <person name="Burity H.A."/>
            <person name="Camargo A.A."/>
            <person name="Cardoso D.D.P."/>
            <person name="Carneiro N.P."/>
            <person name="Carraro D.M."/>
            <person name="Carvalho C.M.B."/>
            <person name="Cascardo J.C.M."/>
            <person name="Cavada B.S."/>
            <person name="Chueire L.M.O."/>
            <person name="Creczynski-Pasa T.B."/>
            <person name="Cunha-Junior N.C."/>
            <person name="Fagundes N."/>
            <person name="Falcao C.L."/>
            <person name="Fantinatti F."/>
            <person name="Farias I.P."/>
            <person name="Felipe M.S.S."/>
            <person name="Ferrari L.P."/>
            <person name="Ferro J.A."/>
            <person name="Ferro M.I.T."/>
            <person name="Franco G.R."/>
            <person name="Freitas N.S.A."/>
            <person name="Furlan L.R."/>
            <person name="Gazzinelli R.T."/>
            <person name="Gomes E.A."/>
            <person name="Goncalves P.R."/>
            <person name="Grangeiro T.B."/>
            <person name="Grattapaglia D."/>
            <person name="Grisard E.C."/>
            <person name="Hanna E.S."/>
            <person name="Jardim S.N."/>
            <person name="Laurino J."/>
            <person name="Leoi L.C.T."/>
            <person name="Lima L.F.A."/>
            <person name="Loureiro M.F."/>
            <person name="Lyra M.C.C.P."/>
            <person name="Madeira H.M.F."/>
            <person name="Manfio G.P."/>
            <person name="Maranhao A.Q."/>
            <person name="Martins W.S."/>
            <person name="di Mauro S.M.Z."/>
            <person name="de Medeiros S.R.B."/>
            <person name="Meissner R.V."/>
            <person name="Moreira M.A.M."/>
            <person name="Nascimento F.F."/>
            <person name="Nicolas M.F."/>
            <person name="Oliveira J.G."/>
            <person name="Oliveira S.C."/>
            <person name="Paixao R.F.C."/>
            <person name="Parente J.A."/>
            <person name="Pedrosa F.O."/>
            <person name="Pena S.D.J."/>
            <person name="Pereira J.O."/>
            <person name="Pereira M."/>
            <person name="Pinto L.S.R.C."/>
            <person name="Pinto L.S."/>
            <person name="Porto J.I.R."/>
            <person name="Potrich D.P."/>
            <person name="Ramalho-Neto C.E."/>
            <person name="Reis A.M.M."/>
            <person name="Rigo L.U."/>
            <person name="Rondinelli E."/>
            <person name="Santos E.B.P."/>
            <person name="Santos F.R."/>
            <person name="Schneider M.P.C."/>
            <person name="Seuanez H.N."/>
            <person name="Silva A.M.R."/>
            <person name="da Silva A.L.C."/>
            <person name="Silva D.W."/>
            <person name="Silva R."/>
            <person name="Simoes I.C."/>
            <person name="Simon D."/>
            <person name="Soares C.M.A."/>
            <person name="Soares R.B.A."/>
            <person name="Souza E.M."/>
            <person name="Souza K.R.L."/>
            <person name="Souza R.C."/>
            <person name="Steffens M.B.R."/>
            <person name="Steindel M."/>
            <person name="Teixeira S.R."/>
            <person name="Urmenyi T."/>
            <person name="Vettore A."/>
            <person name="Wassem R."/>
            <person name="Zaha A."/>
            <person name="Simpson A.J.G."/>
        </authorList>
    </citation>
    <scope>NUCLEOTIDE SEQUENCE [LARGE SCALE GENOMIC DNA]</scope>
    <source>
        <strain>ATCC 12472 / DSM 30191 / JCM 1249 / CCUG 213 / NBRC 12614 / NCIMB 9131 / NCTC 9757 / MK</strain>
    </source>
</reference>
<organism>
    <name type="scientific">Chromobacterium violaceum (strain ATCC 12472 / DSM 30191 / JCM 1249 / CCUG 213 / NBRC 12614 / NCIMB 9131 / NCTC 9757 / MK)</name>
    <dbReference type="NCBI Taxonomy" id="243365"/>
    <lineage>
        <taxon>Bacteria</taxon>
        <taxon>Pseudomonadati</taxon>
        <taxon>Pseudomonadota</taxon>
        <taxon>Betaproteobacteria</taxon>
        <taxon>Neisseriales</taxon>
        <taxon>Chromobacteriaceae</taxon>
        <taxon>Chromobacterium</taxon>
    </lineage>
</organism>
<proteinExistence type="inferred from homology"/>
<keyword id="KW-1185">Reference proteome</keyword>
<accession>Q7NSG4</accession>
<evidence type="ECO:0000255" key="1">
    <source>
        <dbReference type="HAMAP-Rule" id="MF_00460"/>
    </source>
</evidence>
<comment type="similarity">
    <text evidence="1">Belongs to the UPF0125 (RnfH) family.</text>
</comment>